<dbReference type="EMBL" id="AC026757">
    <property type="protein sequence ID" value="AAG50822.1"/>
    <property type="molecule type" value="Genomic_DNA"/>
</dbReference>
<dbReference type="EMBL" id="AC068324">
    <property type="protein sequence ID" value="AAG51513.1"/>
    <property type="molecule type" value="Genomic_DNA"/>
</dbReference>
<dbReference type="EMBL" id="CP002684">
    <property type="protein sequence ID" value="AEE31938.1"/>
    <property type="molecule type" value="Genomic_DNA"/>
</dbReference>
<dbReference type="PIR" id="F96497">
    <property type="entry name" value="F96497"/>
</dbReference>
<dbReference type="RefSeq" id="NP_175000.1">
    <property type="nucleotide sequence ID" value="NM_103460.1"/>
</dbReference>
<dbReference type="SMR" id="Q9C545"/>
<dbReference type="iPTMnet" id="Q9C545"/>
<dbReference type="PaxDb" id="3702-AT1G43010.1"/>
<dbReference type="EnsemblPlants" id="AT1G43010.1">
    <property type="protein sequence ID" value="AT1G43010.1"/>
    <property type="gene ID" value="AT1G43010"/>
</dbReference>
<dbReference type="GeneID" id="840900"/>
<dbReference type="Gramene" id="AT1G43010.1">
    <property type="protein sequence ID" value="AT1G43010.1"/>
    <property type="gene ID" value="AT1G43010"/>
</dbReference>
<dbReference type="KEGG" id="ath:AT1G43010"/>
<dbReference type="Araport" id="AT1G43010"/>
<dbReference type="TAIR" id="AT1G43010"/>
<dbReference type="eggNOG" id="KOG4197">
    <property type="taxonomic scope" value="Eukaryota"/>
</dbReference>
<dbReference type="HOGENOM" id="CLU_060019_0_0_1"/>
<dbReference type="InParanoid" id="Q9C545"/>
<dbReference type="OMA" id="INIGQHE"/>
<dbReference type="PhylomeDB" id="Q9C545"/>
<dbReference type="PRO" id="PR:Q9C545"/>
<dbReference type="Proteomes" id="UP000006548">
    <property type="component" value="Chromosome 1"/>
</dbReference>
<dbReference type="ExpressionAtlas" id="Q9C545">
    <property type="expression patterns" value="baseline and differential"/>
</dbReference>
<dbReference type="GO" id="GO:0003729">
    <property type="term" value="F:mRNA binding"/>
    <property type="evidence" value="ECO:0007669"/>
    <property type="project" value="UniProtKB-ARBA"/>
</dbReference>
<dbReference type="FunFam" id="1.25.40.10:FF:001541">
    <property type="entry name" value="Pentatricopeptide repeat (PPR) superfamily protein"/>
    <property type="match status" value="1"/>
</dbReference>
<dbReference type="Gene3D" id="1.25.40.10">
    <property type="entry name" value="Tetratricopeptide repeat domain"/>
    <property type="match status" value="1"/>
</dbReference>
<dbReference type="InterPro" id="IPR002885">
    <property type="entry name" value="Pentatricopeptide_rpt"/>
</dbReference>
<dbReference type="InterPro" id="IPR011990">
    <property type="entry name" value="TPR-like_helical_dom_sf"/>
</dbReference>
<dbReference type="PANTHER" id="PTHR45717">
    <property type="entry name" value="OS12G0527900 PROTEIN"/>
    <property type="match status" value="1"/>
</dbReference>
<dbReference type="PANTHER" id="PTHR45717:SF18">
    <property type="entry name" value="PENTACOTRIPEPTIDE-REPEAT REGION OF PRORP DOMAIN-CONTAINING PROTEIN"/>
    <property type="match status" value="1"/>
</dbReference>
<dbReference type="Pfam" id="PF01535">
    <property type="entry name" value="PPR"/>
    <property type="match status" value="1"/>
</dbReference>
<name>PPR72_ARATH</name>
<evidence type="ECO:0000305" key="1"/>
<accession>Q9C545</accession>
<protein>
    <recommendedName>
        <fullName>Putative pentatricopeptide repeat-containing protein At1g43010</fullName>
    </recommendedName>
</protein>
<feature type="chain" id="PRO_0000342813" description="Putative pentatricopeptide repeat-containing protein At1g43010">
    <location>
        <begin position="1"/>
        <end position="257"/>
    </location>
</feature>
<feature type="repeat" description="PPR 1">
    <location>
        <begin position="133"/>
        <end position="168"/>
    </location>
</feature>
<feature type="repeat" description="PPR 2">
    <location>
        <begin position="169"/>
        <end position="203"/>
    </location>
</feature>
<keyword id="KW-1185">Reference proteome</keyword>
<keyword id="KW-0677">Repeat</keyword>
<reference key="1">
    <citation type="journal article" date="2000" name="Nature">
        <title>Sequence and analysis of chromosome 1 of the plant Arabidopsis thaliana.</title>
        <authorList>
            <person name="Theologis A."/>
            <person name="Ecker J.R."/>
            <person name="Palm C.J."/>
            <person name="Federspiel N.A."/>
            <person name="Kaul S."/>
            <person name="White O."/>
            <person name="Alonso J."/>
            <person name="Altafi H."/>
            <person name="Araujo R."/>
            <person name="Bowman C.L."/>
            <person name="Brooks S.Y."/>
            <person name="Buehler E."/>
            <person name="Chan A."/>
            <person name="Chao Q."/>
            <person name="Chen H."/>
            <person name="Cheuk R.F."/>
            <person name="Chin C.W."/>
            <person name="Chung M.K."/>
            <person name="Conn L."/>
            <person name="Conway A.B."/>
            <person name="Conway A.R."/>
            <person name="Creasy T.H."/>
            <person name="Dewar K."/>
            <person name="Dunn P."/>
            <person name="Etgu P."/>
            <person name="Feldblyum T.V."/>
            <person name="Feng J.-D."/>
            <person name="Fong B."/>
            <person name="Fujii C.Y."/>
            <person name="Gill J.E."/>
            <person name="Goldsmith A.D."/>
            <person name="Haas B."/>
            <person name="Hansen N.F."/>
            <person name="Hughes B."/>
            <person name="Huizar L."/>
            <person name="Hunter J.L."/>
            <person name="Jenkins J."/>
            <person name="Johnson-Hopson C."/>
            <person name="Khan S."/>
            <person name="Khaykin E."/>
            <person name="Kim C.J."/>
            <person name="Koo H.L."/>
            <person name="Kremenetskaia I."/>
            <person name="Kurtz D.B."/>
            <person name="Kwan A."/>
            <person name="Lam B."/>
            <person name="Langin-Hooper S."/>
            <person name="Lee A."/>
            <person name="Lee J.M."/>
            <person name="Lenz C.A."/>
            <person name="Li J.H."/>
            <person name="Li Y.-P."/>
            <person name="Lin X."/>
            <person name="Liu S.X."/>
            <person name="Liu Z.A."/>
            <person name="Luros J.S."/>
            <person name="Maiti R."/>
            <person name="Marziali A."/>
            <person name="Militscher J."/>
            <person name="Miranda M."/>
            <person name="Nguyen M."/>
            <person name="Nierman W.C."/>
            <person name="Osborne B.I."/>
            <person name="Pai G."/>
            <person name="Peterson J."/>
            <person name="Pham P.K."/>
            <person name="Rizzo M."/>
            <person name="Rooney T."/>
            <person name="Rowley D."/>
            <person name="Sakano H."/>
            <person name="Salzberg S.L."/>
            <person name="Schwartz J.R."/>
            <person name="Shinn P."/>
            <person name="Southwick A.M."/>
            <person name="Sun H."/>
            <person name="Tallon L.J."/>
            <person name="Tambunga G."/>
            <person name="Toriumi M.J."/>
            <person name="Town C.D."/>
            <person name="Utterback T."/>
            <person name="Van Aken S."/>
            <person name="Vaysberg M."/>
            <person name="Vysotskaia V.S."/>
            <person name="Walker M."/>
            <person name="Wu D."/>
            <person name="Yu G."/>
            <person name="Fraser C.M."/>
            <person name="Venter J.C."/>
            <person name="Davis R.W."/>
        </authorList>
    </citation>
    <scope>NUCLEOTIDE SEQUENCE [LARGE SCALE GENOMIC DNA]</scope>
    <source>
        <strain>cv. Columbia</strain>
    </source>
</reference>
<reference key="2">
    <citation type="journal article" date="2017" name="Plant J.">
        <title>Araport11: a complete reannotation of the Arabidopsis thaliana reference genome.</title>
        <authorList>
            <person name="Cheng C.Y."/>
            <person name="Krishnakumar V."/>
            <person name="Chan A.P."/>
            <person name="Thibaud-Nissen F."/>
            <person name="Schobel S."/>
            <person name="Town C.D."/>
        </authorList>
    </citation>
    <scope>GENOME REANNOTATION</scope>
    <source>
        <strain>cv. Columbia</strain>
    </source>
</reference>
<reference key="3">
    <citation type="journal article" date="2004" name="Plant Cell">
        <title>Genome-wide analysis of Arabidopsis pentatricopeptide repeat proteins reveals their essential role in organelle biogenesis.</title>
        <authorList>
            <person name="Lurin C."/>
            <person name="Andres C."/>
            <person name="Aubourg S."/>
            <person name="Bellaoui M."/>
            <person name="Bitton F."/>
            <person name="Bruyere C."/>
            <person name="Caboche M."/>
            <person name="Debast C."/>
            <person name="Gualberto J."/>
            <person name="Hoffmann B."/>
            <person name="Lecharny A."/>
            <person name="Le Ret M."/>
            <person name="Martin-Magniette M.-L."/>
            <person name="Mireau H."/>
            <person name="Peeters N."/>
            <person name="Renou J.-P."/>
            <person name="Szurek B."/>
            <person name="Taconnat L."/>
            <person name="Small I."/>
        </authorList>
    </citation>
    <scope>GENE FAMILY</scope>
</reference>
<comment type="similarity">
    <text evidence="1">Belongs to the PPR family. P subfamily.</text>
</comment>
<comment type="online information" name="Pentatricopeptide repeat proteins">
    <link uri="https://ppr.plantenergy.uwa.edu.au"/>
</comment>
<gene>
    <name type="ordered locus">At1g43010</name>
    <name type="ORF">F13A11.14</name>
    <name type="ORF">F2H10.3</name>
</gene>
<sequence>MGKAQIIQHQARRILSQSNRNCLFRRSYETLPAANQTLPSRIKTDINQKASIIPLLEQWRKQGYEVNPSHLRGLIKNLSDCKNFTTALEASKWMFKHSVFDNFPEDCAAQLHLVNTVLGLEEAEKMFKNIPEKMRDYSVLLSSYTKPVRTVDKAEATFKKMRELGFLLKPYLFNSMICLYGQLQRLDMVEKLLYKLKKNNMEVGSLKVNNVSRVYANINAMEKFKTWVSKEGIELERDTIVAMAKAYHRAGSIEKAR</sequence>
<proteinExistence type="inferred from homology"/>
<organism>
    <name type="scientific">Arabidopsis thaliana</name>
    <name type="common">Mouse-ear cress</name>
    <dbReference type="NCBI Taxonomy" id="3702"/>
    <lineage>
        <taxon>Eukaryota</taxon>
        <taxon>Viridiplantae</taxon>
        <taxon>Streptophyta</taxon>
        <taxon>Embryophyta</taxon>
        <taxon>Tracheophyta</taxon>
        <taxon>Spermatophyta</taxon>
        <taxon>Magnoliopsida</taxon>
        <taxon>eudicotyledons</taxon>
        <taxon>Gunneridae</taxon>
        <taxon>Pentapetalae</taxon>
        <taxon>rosids</taxon>
        <taxon>malvids</taxon>
        <taxon>Brassicales</taxon>
        <taxon>Brassicaceae</taxon>
        <taxon>Camelineae</taxon>
        <taxon>Arabidopsis</taxon>
    </lineage>
</organism>